<comment type="function">
    <text evidence="1">Catalyzes the 1,3-allylic rearrangement of the homoallylic substrate isopentenyl (IPP) to its highly electrophilic allylic isomer, dimethylallyl diphosphate (DMAPP).</text>
</comment>
<comment type="catalytic activity">
    <reaction evidence="1">
        <text>isopentenyl diphosphate = dimethylallyl diphosphate</text>
        <dbReference type="Rhea" id="RHEA:23284"/>
        <dbReference type="ChEBI" id="CHEBI:57623"/>
        <dbReference type="ChEBI" id="CHEBI:128769"/>
        <dbReference type="EC" id="5.3.3.2"/>
    </reaction>
</comment>
<comment type="cofactor">
    <cofactor evidence="1">
        <name>Mg(2+)</name>
        <dbReference type="ChEBI" id="CHEBI:18420"/>
    </cofactor>
    <text evidence="1">Binds 1 Mg(2+) ion per subunit. The magnesium ion binds only when substrate is bound.</text>
</comment>
<comment type="cofactor">
    <cofactor evidence="1">
        <name>Mn(2+)</name>
        <dbReference type="ChEBI" id="CHEBI:29035"/>
    </cofactor>
    <text evidence="1">Binds 1 Mn(2+) ion per subunit.</text>
</comment>
<comment type="pathway">
    <text evidence="1">Isoprenoid biosynthesis; dimethylallyl diphosphate biosynthesis; dimethylallyl diphosphate from isopentenyl diphosphate: step 1/1.</text>
</comment>
<comment type="subcellular location">
    <subcellularLocation>
        <location evidence="1">Cytoplasm</location>
    </subcellularLocation>
</comment>
<comment type="similarity">
    <text evidence="1">Belongs to the IPP isomerase type 1 family.</text>
</comment>
<feature type="chain" id="PRO_0000205245" description="Isopentenyl-diphosphate Delta-isomerase">
    <location>
        <begin position="1"/>
        <end position="183"/>
    </location>
</feature>
<feature type="domain" description="Nudix hydrolase">
    <location>
        <begin position="31"/>
        <end position="169"/>
    </location>
</feature>
<feature type="active site" evidence="1">
    <location>
        <position position="68"/>
    </location>
</feature>
<feature type="active site" evidence="1">
    <location>
        <position position="120"/>
    </location>
</feature>
<feature type="binding site" evidence="1">
    <location>
        <position position="26"/>
    </location>
    <ligand>
        <name>Mn(2+)</name>
        <dbReference type="ChEBI" id="CHEBI:29035"/>
    </ligand>
</feature>
<feature type="binding site" evidence="1">
    <location>
        <position position="33"/>
    </location>
    <ligand>
        <name>Mn(2+)</name>
        <dbReference type="ChEBI" id="CHEBI:29035"/>
    </ligand>
</feature>
<feature type="binding site" evidence="1">
    <location>
        <position position="68"/>
    </location>
    <ligand>
        <name>Mg(2+)</name>
        <dbReference type="ChEBI" id="CHEBI:18420"/>
    </ligand>
</feature>
<feature type="binding site" evidence="1">
    <location>
        <position position="70"/>
    </location>
    <ligand>
        <name>Mn(2+)</name>
        <dbReference type="ChEBI" id="CHEBI:29035"/>
    </ligand>
</feature>
<feature type="binding site" evidence="1">
    <location>
        <position position="88"/>
    </location>
    <ligand>
        <name>Mg(2+)</name>
        <dbReference type="ChEBI" id="CHEBI:18420"/>
    </ligand>
</feature>
<feature type="binding site" evidence="1">
    <location>
        <position position="118"/>
    </location>
    <ligand>
        <name>Mn(2+)</name>
        <dbReference type="ChEBI" id="CHEBI:29035"/>
    </ligand>
</feature>
<feature type="binding site" evidence="1">
    <location>
        <position position="120"/>
    </location>
    <ligand>
        <name>Mn(2+)</name>
        <dbReference type="ChEBI" id="CHEBI:29035"/>
    </ligand>
</feature>
<evidence type="ECO:0000255" key="1">
    <source>
        <dbReference type="HAMAP-Rule" id="MF_00202"/>
    </source>
</evidence>
<proteinExistence type="inferred from homology"/>
<accession>P60923</accession>
<name>IDI_CORDI</name>
<dbReference type="EC" id="5.3.3.2" evidence="1"/>
<dbReference type="EMBL" id="BX248359">
    <property type="protein sequence ID" value="CAE50259.1"/>
    <property type="molecule type" value="Genomic_DNA"/>
</dbReference>
<dbReference type="RefSeq" id="WP_010935286.1">
    <property type="nucleotide sequence ID" value="NC_002935.2"/>
</dbReference>
<dbReference type="SMR" id="P60923"/>
<dbReference type="STRING" id="257309.DIP1730"/>
<dbReference type="KEGG" id="cdi:DIP1730"/>
<dbReference type="HOGENOM" id="CLU_060552_2_0_11"/>
<dbReference type="UniPathway" id="UPA00059">
    <property type="reaction ID" value="UER00104"/>
</dbReference>
<dbReference type="Proteomes" id="UP000002198">
    <property type="component" value="Chromosome"/>
</dbReference>
<dbReference type="GO" id="GO:0005737">
    <property type="term" value="C:cytoplasm"/>
    <property type="evidence" value="ECO:0007669"/>
    <property type="project" value="UniProtKB-SubCell"/>
</dbReference>
<dbReference type="GO" id="GO:0004452">
    <property type="term" value="F:isopentenyl-diphosphate delta-isomerase activity"/>
    <property type="evidence" value="ECO:0007669"/>
    <property type="project" value="UniProtKB-UniRule"/>
</dbReference>
<dbReference type="GO" id="GO:0046872">
    <property type="term" value="F:metal ion binding"/>
    <property type="evidence" value="ECO:0007669"/>
    <property type="project" value="UniProtKB-KW"/>
</dbReference>
<dbReference type="GO" id="GO:0050992">
    <property type="term" value="P:dimethylallyl diphosphate biosynthetic process"/>
    <property type="evidence" value="ECO:0007669"/>
    <property type="project" value="UniProtKB-UniRule"/>
</dbReference>
<dbReference type="GO" id="GO:0008299">
    <property type="term" value="P:isoprenoid biosynthetic process"/>
    <property type="evidence" value="ECO:0007669"/>
    <property type="project" value="UniProtKB-KW"/>
</dbReference>
<dbReference type="CDD" id="cd02885">
    <property type="entry name" value="NUDIX_IPP_Isomerase"/>
    <property type="match status" value="1"/>
</dbReference>
<dbReference type="Gene3D" id="3.90.79.10">
    <property type="entry name" value="Nucleoside Triphosphate Pyrophosphohydrolase"/>
    <property type="match status" value="1"/>
</dbReference>
<dbReference type="HAMAP" id="MF_00202">
    <property type="entry name" value="Idi"/>
    <property type="match status" value="1"/>
</dbReference>
<dbReference type="InterPro" id="IPR056375">
    <property type="entry name" value="Idi_bact"/>
</dbReference>
<dbReference type="InterPro" id="IPR011876">
    <property type="entry name" value="IsopentenylPP_isomerase_typ1"/>
</dbReference>
<dbReference type="InterPro" id="IPR015797">
    <property type="entry name" value="NUDIX_hydrolase-like_dom_sf"/>
</dbReference>
<dbReference type="InterPro" id="IPR000086">
    <property type="entry name" value="NUDIX_hydrolase_dom"/>
</dbReference>
<dbReference type="NCBIfam" id="TIGR02150">
    <property type="entry name" value="IPP_isom_1"/>
    <property type="match status" value="1"/>
</dbReference>
<dbReference type="NCBIfam" id="NF002995">
    <property type="entry name" value="PRK03759.1"/>
    <property type="match status" value="1"/>
</dbReference>
<dbReference type="PANTHER" id="PTHR10885">
    <property type="entry name" value="ISOPENTENYL-DIPHOSPHATE DELTA-ISOMERASE"/>
    <property type="match status" value="1"/>
</dbReference>
<dbReference type="PANTHER" id="PTHR10885:SF0">
    <property type="entry name" value="ISOPENTENYL-DIPHOSPHATE DELTA-ISOMERASE"/>
    <property type="match status" value="1"/>
</dbReference>
<dbReference type="Pfam" id="PF00293">
    <property type="entry name" value="NUDIX"/>
    <property type="match status" value="1"/>
</dbReference>
<dbReference type="PIRSF" id="PIRSF018427">
    <property type="entry name" value="Isopntndiph_ism"/>
    <property type="match status" value="1"/>
</dbReference>
<dbReference type="SUPFAM" id="SSF55811">
    <property type="entry name" value="Nudix"/>
    <property type="match status" value="1"/>
</dbReference>
<dbReference type="PROSITE" id="PS51462">
    <property type="entry name" value="NUDIX"/>
    <property type="match status" value="1"/>
</dbReference>
<gene>
    <name evidence="1" type="primary">idi</name>
    <name type="ordered locus">DIP1730</name>
</gene>
<keyword id="KW-0963">Cytoplasm</keyword>
<keyword id="KW-0413">Isomerase</keyword>
<keyword id="KW-0414">Isoprene biosynthesis</keyword>
<keyword id="KW-0460">Magnesium</keyword>
<keyword id="KW-0464">Manganese</keyword>
<keyword id="KW-0479">Metal-binding</keyword>
<keyword id="KW-1185">Reference proteome</keyword>
<sequence length="183" mass="20193">MNDVELVVLADEFGKPSGTAVKSEVHTTDTPLHFAFSCYVRNNKGDLLITRRALSKKTWPGVWTNSACGHLMPGETPEQAVARRVPHEIGISQDKLVNIACVLPDFSYRAVDSRGIVEWEICPVFTAAVTDDALLPEAEEVDSLVWVEPSKLIHAVHSAPFAFSPWMVEQLQHEALRTALTTS</sequence>
<reference key="1">
    <citation type="journal article" date="2003" name="Nucleic Acids Res.">
        <title>The complete genome sequence and analysis of Corynebacterium diphtheriae NCTC13129.</title>
        <authorList>
            <person name="Cerdeno-Tarraga A.-M."/>
            <person name="Efstratiou A."/>
            <person name="Dover L.G."/>
            <person name="Holden M.T.G."/>
            <person name="Pallen M.J."/>
            <person name="Bentley S.D."/>
            <person name="Besra G.S."/>
            <person name="Churcher C.M."/>
            <person name="James K.D."/>
            <person name="De Zoysa A."/>
            <person name="Chillingworth T."/>
            <person name="Cronin A."/>
            <person name="Dowd L."/>
            <person name="Feltwell T."/>
            <person name="Hamlin N."/>
            <person name="Holroyd S."/>
            <person name="Jagels K."/>
            <person name="Moule S."/>
            <person name="Quail M.A."/>
            <person name="Rabbinowitsch E."/>
            <person name="Rutherford K.M."/>
            <person name="Thomson N.R."/>
            <person name="Unwin L."/>
            <person name="Whitehead S."/>
            <person name="Barrell B.G."/>
            <person name="Parkhill J."/>
        </authorList>
    </citation>
    <scope>NUCLEOTIDE SEQUENCE [LARGE SCALE GENOMIC DNA]</scope>
    <source>
        <strain>ATCC 700971 / NCTC 13129 / Biotype gravis</strain>
    </source>
</reference>
<protein>
    <recommendedName>
        <fullName evidence="1">Isopentenyl-diphosphate Delta-isomerase</fullName>
        <shortName evidence="1">IPP isomerase</shortName>
        <ecNumber evidence="1">5.3.3.2</ecNumber>
    </recommendedName>
    <alternativeName>
        <fullName evidence="1">IPP:DMAPP isomerase</fullName>
    </alternativeName>
    <alternativeName>
        <fullName evidence="1">Isopentenyl pyrophosphate isomerase</fullName>
    </alternativeName>
</protein>
<organism>
    <name type="scientific">Corynebacterium diphtheriae (strain ATCC 700971 / NCTC 13129 / Biotype gravis)</name>
    <dbReference type="NCBI Taxonomy" id="257309"/>
    <lineage>
        <taxon>Bacteria</taxon>
        <taxon>Bacillati</taxon>
        <taxon>Actinomycetota</taxon>
        <taxon>Actinomycetes</taxon>
        <taxon>Mycobacteriales</taxon>
        <taxon>Corynebacteriaceae</taxon>
        <taxon>Corynebacterium</taxon>
    </lineage>
</organism>